<dbReference type="EMBL" id="AE003852">
    <property type="protein sequence ID" value="AAF93615.1"/>
    <property type="molecule type" value="Genomic_DNA"/>
</dbReference>
<dbReference type="PIR" id="A82323">
    <property type="entry name" value="A82323"/>
</dbReference>
<dbReference type="RefSeq" id="NP_230096.1">
    <property type="nucleotide sequence ID" value="NC_002505.1"/>
</dbReference>
<dbReference type="RefSeq" id="WP_000383338.1">
    <property type="nucleotide sequence ID" value="NZ_LT906614.1"/>
</dbReference>
<dbReference type="PDB" id="1XVS">
    <property type="method" value="X-ray"/>
    <property type="resolution" value="2.01 A"/>
    <property type="chains" value="A/B=1-126"/>
</dbReference>
<dbReference type="PDBsum" id="1XVS"/>
<dbReference type="SMR" id="Q9KUS3"/>
<dbReference type="STRING" id="243277.VC_0442"/>
<dbReference type="DNASU" id="2615774"/>
<dbReference type="EnsemblBacteria" id="AAF93615">
    <property type="protein sequence ID" value="AAF93615"/>
    <property type="gene ID" value="VC_0442"/>
</dbReference>
<dbReference type="GeneID" id="89515409"/>
<dbReference type="KEGG" id="vch:VC_0442"/>
<dbReference type="PATRIC" id="fig|243277.26.peg.416"/>
<dbReference type="eggNOG" id="COG2967">
    <property type="taxonomic scope" value="Bacteria"/>
</dbReference>
<dbReference type="HOGENOM" id="CLU_128074_0_0_6"/>
<dbReference type="EvolutionaryTrace" id="Q9KUS3"/>
<dbReference type="Proteomes" id="UP000000584">
    <property type="component" value="Chromosome 1"/>
</dbReference>
<dbReference type="GO" id="GO:0070987">
    <property type="term" value="P:error-free translesion synthesis"/>
    <property type="evidence" value="ECO:0000318"/>
    <property type="project" value="GO_Central"/>
</dbReference>
<dbReference type="Gene3D" id="2.60.40.1470">
    <property type="entry name" value="ApaG domain"/>
    <property type="match status" value="1"/>
</dbReference>
<dbReference type="HAMAP" id="MF_00791">
    <property type="entry name" value="ApaG"/>
    <property type="match status" value="1"/>
</dbReference>
<dbReference type="InterPro" id="IPR007474">
    <property type="entry name" value="ApaG_domain"/>
</dbReference>
<dbReference type="InterPro" id="IPR036767">
    <property type="entry name" value="ApaG_sf"/>
</dbReference>
<dbReference type="InterPro" id="IPR023065">
    <property type="entry name" value="Uncharacterised_ApaG"/>
</dbReference>
<dbReference type="NCBIfam" id="NF003967">
    <property type="entry name" value="PRK05461.1"/>
    <property type="match status" value="1"/>
</dbReference>
<dbReference type="PANTHER" id="PTHR14289">
    <property type="entry name" value="F-BOX ONLY PROTEIN 3"/>
    <property type="match status" value="1"/>
</dbReference>
<dbReference type="PANTHER" id="PTHR14289:SF16">
    <property type="entry name" value="POLYMERASE DELTA-INTERACTING PROTEIN 2"/>
    <property type="match status" value="1"/>
</dbReference>
<dbReference type="Pfam" id="PF04379">
    <property type="entry name" value="DUF525"/>
    <property type="match status" value="1"/>
</dbReference>
<dbReference type="SUPFAM" id="SSF110069">
    <property type="entry name" value="ApaG-like"/>
    <property type="match status" value="1"/>
</dbReference>
<dbReference type="PROSITE" id="PS51087">
    <property type="entry name" value="APAG"/>
    <property type="match status" value="1"/>
</dbReference>
<sequence>MDVSLPCIKIQVQTRYIEEQSNPEYQRFVFAYLITIKNLSSQTVQLMSRRWLITDADGKQTVVEGDGVVGEQPRIKANDEYTYSSGTALDTPVGVMQGQYLMIDEQGESFTVEIEPFRLAVPHVLN</sequence>
<name>APAG_VIBCH</name>
<reference key="1">
    <citation type="journal article" date="2000" name="Nature">
        <title>DNA sequence of both chromosomes of the cholera pathogen Vibrio cholerae.</title>
        <authorList>
            <person name="Heidelberg J.F."/>
            <person name="Eisen J.A."/>
            <person name="Nelson W.C."/>
            <person name="Clayton R.A."/>
            <person name="Gwinn M.L."/>
            <person name="Dodson R.J."/>
            <person name="Haft D.H."/>
            <person name="Hickey E.K."/>
            <person name="Peterson J.D."/>
            <person name="Umayam L.A."/>
            <person name="Gill S.R."/>
            <person name="Nelson K.E."/>
            <person name="Read T.D."/>
            <person name="Tettelin H."/>
            <person name="Richardson D.L."/>
            <person name="Ermolaeva M.D."/>
            <person name="Vamathevan J.J."/>
            <person name="Bass S."/>
            <person name="Qin H."/>
            <person name="Dragoi I."/>
            <person name="Sellers P."/>
            <person name="McDonald L.A."/>
            <person name="Utterback T.R."/>
            <person name="Fleischmann R.D."/>
            <person name="Nierman W.C."/>
            <person name="White O."/>
            <person name="Salzberg S.L."/>
            <person name="Smith H.O."/>
            <person name="Colwell R.R."/>
            <person name="Mekalanos J.J."/>
            <person name="Venter J.C."/>
            <person name="Fraser C.M."/>
        </authorList>
    </citation>
    <scope>NUCLEOTIDE SEQUENCE [LARGE SCALE GENOMIC DNA]</scope>
    <source>
        <strain>ATCC 39315 / El Tor Inaba N16961</strain>
    </source>
</reference>
<feature type="chain" id="PRO_0000197965" description="Protein ApaG">
    <location>
        <begin position="1"/>
        <end position="126"/>
    </location>
</feature>
<feature type="domain" description="ApaG" evidence="1">
    <location>
        <begin position="2"/>
        <end position="126"/>
    </location>
</feature>
<feature type="strand" evidence="2">
    <location>
        <begin position="8"/>
        <end position="16"/>
    </location>
</feature>
<feature type="helix" evidence="2">
    <location>
        <begin position="18"/>
        <end position="20"/>
    </location>
</feature>
<feature type="helix" evidence="2">
    <location>
        <begin position="23"/>
        <end position="25"/>
    </location>
</feature>
<feature type="strand" evidence="2">
    <location>
        <begin position="27"/>
        <end position="38"/>
    </location>
</feature>
<feature type="strand" evidence="2">
    <location>
        <begin position="40"/>
        <end position="42"/>
    </location>
</feature>
<feature type="strand" evidence="2">
    <location>
        <begin position="44"/>
        <end position="55"/>
    </location>
</feature>
<feature type="strand" evidence="2">
    <location>
        <begin position="60"/>
        <end position="68"/>
    </location>
</feature>
<feature type="strand" evidence="2">
    <location>
        <begin position="80"/>
        <end position="103"/>
    </location>
</feature>
<feature type="strand" evidence="2">
    <location>
        <begin position="109"/>
        <end position="120"/>
    </location>
</feature>
<accession>Q9KUS3</accession>
<evidence type="ECO:0000255" key="1">
    <source>
        <dbReference type="HAMAP-Rule" id="MF_00791"/>
    </source>
</evidence>
<evidence type="ECO:0007829" key="2">
    <source>
        <dbReference type="PDB" id="1XVS"/>
    </source>
</evidence>
<protein>
    <recommendedName>
        <fullName evidence="1">Protein ApaG</fullName>
    </recommendedName>
</protein>
<organism>
    <name type="scientific">Vibrio cholerae serotype O1 (strain ATCC 39315 / El Tor Inaba N16961)</name>
    <dbReference type="NCBI Taxonomy" id="243277"/>
    <lineage>
        <taxon>Bacteria</taxon>
        <taxon>Pseudomonadati</taxon>
        <taxon>Pseudomonadota</taxon>
        <taxon>Gammaproteobacteria</taxon>
        <taxon>Vibrionales</taxon>
        <taxon>Vibrionaceae</taxon>
        <taxon>Vibrio</taxon>
    </lineage>
</organism>
<keyword id="KW-0002">3D-structure</keyword>
<keyword id="KW-1185">Reference proteome</keyword>
<proteinExistence type="evidence at protein level"/>
<gene>
    <name evidence="1" type="primary">apaG</name>
    <name type="ordered locus">VC_0442</name>
</gene>